<feature type="chain" id="PRO_1000021056" description="Inner membrane-spanning protein YciB">
    <location>
        <begin position="1"/>
        <end position="181"/>
    </location>
</feature>
<feature type="transmembrane region" description="Helical" evidence="1">
    <location>
        <begin position="22"/>
        <end position="42"/>
    </location>
</feature>
<feature type="transmembrane region" description="Helical" evidence="1">
    <location>
        <begin position="50"/>
        <end position="70"/>
    </location>
</feature>
<feature type="transmembrane region" description="Helical" evidence="1">
    <location>
        <begin position="72"/>
        <end position="92"/>
    </location>
</feature>
<feature type="transmembrane region" description="Helical" evidence="1">
    <location>
        <begin position="118"/>
        <end position="138"/>
    </location>
</feature>
<feature type="transmembrane region" description="Helical" evidence="1">
    <location>
        <begin position="148"/>
        <end position="168"/>
    </location>
</feature>
<protein>
    <recommendedName>
        <fullName evidence="1">Inner membrane-spanning protein YciB</fullName>
    </recommendedName>
</protein>
<gene>
    <name evidence="1" type="primary">yciB</name>
    <name type="ordered locus">Sden_1467</name>
</gene>
<evidence type="ECO:0000255" key="1">
    <source>
        <dbReference type="HAMAP-Rule" id="MF_00189"/>
    </source>
</evidence>
<proteinExistence type="inferred from homology"/>
<sequence length="181" mass="20586">MKQLLDFLPLIIFFTVYKLVDIYTATGALIAATAVQIAILYFVYKKVEKMHLVTFAMVTVFGTLTLAFHDDAFIKWKVTIIYSLFAIALAVSQIMNKSIIKAMLGKELKADDNIWARVTWYWALFFIGCGVLNVYVAFSLPLETWVNFKVFGLTALTLLNTVISVFYIYKHAQPEQDDTAN</sequence>
<comment type="function">
    <text evidence="1">Plays a role in cell envelope biogenesis, maintenance of cell envelope integrity and membrane homeostasis.</text>
</comment>
<comment type="subcellular location">
    <subcellularLocation>
        <location evidence="1">Cell inner membrane</location>
        <topology evidence="1">Multi-pass membrane protein</topology>
    </subcellularLocation>
</comment>
<comment type="similarity">
    <text evidence="1">Belongs to the YciB family.</text>
</comment>
<accession>Q12P74</accession>
<organism>
    <name type="scientific">Shewanella denitrificans (strain OS217 / ATCC BAA-1090 / DSM 15013)</name>
    <dbReference type="NCBI Taxonomy" id="318161"/>
    <lineage>
        <taxon>Bacteria</taxon>
        <taxon>Pseudomonadati</taxon>
        <taxon>Pseudomonadota</taxon>
        <taxon>Gammaproteobacteria</taxon>
        <taxon>Alteromonadales</taxon>
        <taxon>Shewanellaceae</taxon>
        <taxon>Shewanella</taxon>
    </lineage>
</organism>
<name>YCIB_SHEDO</name>
<dbReference type="EMBL" id="CP000302">
    <property type="protein sequence ID" value="ABE54752.1"/>
    <property type="molecule type" value="Genomic_DNA"/>
</dbReference>
<dbReference type="RefSeq" id="WP_011495910.1">
    <property type="nucleotide sequence ID" value="NC_007954.1"/>
</dbReference>
<dbReference type="STRING" id="318161.Sden_1467"/>
<dbReference type="KEGG" id="sdn:Sden_1467"/>
<dbReference type="eggNOG" id="COG2917">
    <property type="taxonomic scope" value="Bacteria"/>
</dbReference>
<dbReference type="HOGENOM" id="CLU_089554_2_0_6"/>
<dbReference type="OrthoDB" id="9788219at2"/>
<dbReference type="Proteomes" id="UP000001982">
    <property type="component" value="Chromosome"/>
</dbReference>
<dbReference type="GO" id="GO:0005886">
    <property type="term" value="C:plasma membrane"/>
    <property type="evidence" value="ECO:0007669"/>
    <property type="project" value="UniProtKB-SubCell"/>
</dbReference>
<dbReference type="HAMAP" id="MF_00189">
    <property type="entry name" value="YciB"/>
    <property type="match status" value="1"/>
</dbReference>
<dbReference type="InterPro" id="IPR006008">
    <property type="entry name" value="YciB"/>
</dbReference>
<dbReference type="NCBIfam" id="TIGR00997">
    <property type="entry name" value="ispZ"/>
    <property type="match status" value="1"/>
</dbReference>
<dbReference type="NCBIfam" id="NF001324">
    <property type="entry name" value="PRK00259.1-2"/>
    <property type="match status" value="1"/>
</dbReference>
<dbReference type="NCBIfam" id="NF001325">
    <property type="entry name" value="PRK00259.1-3"/>
    <property type="match status" value="1"/>
</dbReference>
<dbReference type="PANTHER" id="PTHR36917:SF1">
    <property type="entry name" value="INNER MEMBRANE-SPANNING PROTEIN YCIB"/>
    <property type="match status" value="1"/>
</dbReference>
<dbReference type="PANTHER" id="PTHR36917">
    <property type="entry name" value="INTRACELLULAR SEPTATION PROTEIN A-RELATED"/>
    <property type="match status" value="1"/>
</dbReference>
<dbReference type="Pfam" id="PF04279">
    <property type="entry name" value="IspA"/>
    <property type="match status" value="1"/>
</dbReference>
<keyword id="KW-0997">Cell inner membrane</keyword>
<keyword id="KW-1003">Cell membrane</keyword>
<keyword id="KW-0472">Membrane</keyword>
<keyword id="KW-1185">Reference proteome</keyword>
<keyword id="KW-0812">Transmembrane</keyword>
<keyword id="KW-1133">Transmembrane helix</keyword>
<reference key="1">
    <citation type="submission" date="2006-03" db="EMBL/GenBank/DDBJ databases">
        <title>Complete sequence of Shewanella denitrificans OS217.</title>
        <authorList>
            <consortium name="US DOE Joint Genome Institute"/>
            <person name="Copeland A."/>
            <person name="Lucas S."/>
            <person name="Lapidus A."/>
            <person name="Barry K."/>
            <person name="Detter J.C."/>
            <person name="Glavina del Rio T."/>
            <person name="Hammon N."/>
            <person name="Israni S."/>
            <person name="Dalin E."/>
            <person name="Tice H."/>
            <person name="Pitluck S."/>
            <person name="Brettin T."/>
            <person name="Bruce D."/>
            <person name="Han C."/>
            <person name="Tapia R."/>
            <person name="Gilna P."/>
            <person name="Kiss H."/>
            <person name="Schmutz J."/>
            <person name="Larimer F."/>
            <person name="Land M."/>
            <person name="Hauser L."/>
            <person name="Kyrpides N."/>
            <person name="Lykidis A."/>
            <person name="Richardson P."/>
        </authorList>
    </citation>
    <scope>NUCLEOTIDE SEQUENCE [LARGE SCALE GENOMIC DNA]</scope>
    <source>
        <strain>OS217 / ATCC BAA-1090 / DSM 15013</strain>
    </source>
</reference>